<protein>
    <recommendedName>
        <fullName evidence="1">tRNA 2-selenouridine synthase</fullName>
        <ecNumber evidence="1">2.9.1.3</ecNumber>
    </recommendedName>
</protein>
<evidence type="ECO:0000255" key="1">
    <source>
        <dbReference type="HAMAP-Rule" id="MF_01622"/>
    </source>
</evidence>
<keyword id="KW-1185">Reference proteome</keyword>
<keyword id="KW-0711">Selenium</keyword>
<keyword id="KW-0808">Transferase</keyword>
<gene>
    <name evidence="1" type="primary">selU</name>
    <name type="ordered locus">ESA_02769</name>
</gene>
<name>SELU_CROS8</name>
<dbReference type="EC" id="2.9.1.3" evidence="1"/>
<dbReference type="EMBL" id="CP000783">
    <property type="protein sequence ID" value="ABU78000.1"/>
    <property type="molecule type" value="Genomic_DNA"/>
</dbReference>
<dbReference type="SMR" id="A7MJZ3"/>
<dbReference type="KEGG" id="esa:ESA_02769"/>
<dbReference type="PATRIC" id="fig|290339.8.peg.2463"/>
<dbReference type="HOGENOM" id="CLU_043456_1_0_6"/>
<dbReference type="Proteomes" id="UP000000260">
    <property type="component" value="Chromosome"/>
</dbReference>
<dbReference type="GO" id="GO:0016765">
    <property type="term" value="F:transferase activity, transferring alkyl or aryl (other than methyl) groups"/>
    <property type="evidence" value="ECO:0007669"/>
    <property type="project" value="UniProtKB-UniRule"/>
</dbReference>
<dbReference type="GO" id="GO:0043828">
    <property type="term" value="F:tRNA 2-selenouridine synthase activity"/>
    <property type="evidence" value="ECO:0007669"/>
    <property type="project" value="UniProtKB-EC"/>
</dbReference>
<dbReference type="GO" id="GO:0002098">
    <property type="term" value="P:tRNA wobble uridine modification"/>
    <property type="evidence" value="ECO:0007669"/>
    <property type="project" value="UniProtKB-UniRule"/>
</dbReference>
<dbReference type="CDD" id="cd01520">
    <property type="entry name" value="RHOD_YbbB"/>
    <property type="match status" value="1"/>
</dbReference>
<dbReference type="Gene3D" id="3.40.250.10">
    <property type="entry name" value="Rhodanese-like domain"/>
    <property type="match status" value="1"/>
</dbReference>
<dbReference type="HAMAP" id="MF_01622">
    <property type="entry name" value="tRNA_sel_U_synth"/>
    <property type="match status" value="1"/>
</dbReference>
<dbReference type="InterPro" id="IPR027417">
    <property type="entry name" value="P-loop_NTPase"/>
</dbReference>
<dbReference type="InterPro" id="IPR001763">
    <property type="entry name" value="Rhodanese-like_dom"/>
</dbReference>
<dbReference type="InterPro" id="IPR036873">
    <property type="entry name" value="Rhodanese-like_dom_sf"/>
</dbReference>
<dbReference type="InterPro" id="IPR017582">
    <property type="entry name" value="SelU"/>
</dbReference>
<dbReference type="NCBIfam" id="NF008749">
    <property type="entry name" value="PRK11784.1-1"/>
    <property type="match status" value="1"/>
</dbReference>
<dbReference type="NCBIfam" id="NF008751">
    <property type="entry name" value="PRK11784.1-3"/>
    <property type="match status" value="1"/>
</dbReference>
<dbReference type="NCBIfam" id="TIGR03167">
    <property type="entry name" value="tRNA_sel_U_synt"/>
    <property type="match status" value="1"/>
</dbReference>
<dbReference type="PANTHER" id="PTHR30401">
    <property type="entry name" value="TRNA 2-SELENOURIDINE SYNTHASE"/>
    <property type="match status" value="1"/>
</dbReference>
<dbReference type="PANTHER" id="PTHR30401:SF0">
    <property type="entry name" value="TRNA 2-SELENOURIDINE SYNTHASE"/>
    <property type="match status" value="1"/>
</dbReference>
<dbReference type="Pfam" id="PF00581">
    <property type="entry name" value="Rhodanese"/>
    <property type="match status" value="1"/>
</dbReference>
<dbReference type="SMART" id="SM00450">
    <property type="entry name" value="RHOD"/>
    <property type="match status" value="1"/>
</dbReference>
<dbReference type="SUPFAM" id="SSF52540">
    <property type="entry name" value="P-loop containing nucleoside triphosphate hydrolases"/>
    <property type="match status" value="1"/>
</dbReference>
<dbReference type="SUPFAM" id="SSF52821">
    <property type="entry name" value="Rhodanese/Cell cycle control phosphatase"/>
    <property type="match status" value="1"/>
</dbReference>
<dbReference type="PROSITE" id="PS50206">
    <property type="entry name" value="RHODANESE_3"/>
    <property type="match status" value="1"/>
</dbReference>
<sequence length="377" mass="42608">MQKDAQRRPDSDDALALITRGVTLIDVRAPVEFAQGAMPGAINLPLMNNDERAAVGTCYKQHGQQAALALGHRLVYGEVREARLNAWRLACERHPEGFLCCARGGMRSYIVQQWLRERGIDYPLVEGGYKRLRQEAMDATDRLSRLPMVLIGGCTGSGKTQLVKALPTGIDLEGLAHHRGSSFGRTLTPQRAQASFENHLAAAMLNHHARWTTLSNPFWVLEDEGKMIGANHLPAVLREQMLQAPVAVVEEPLERRLERLREEYFVQMQAAFQAALGDEAAGWRAYGDYLHHGLYAIRRRLGLARYAELAALQEAALARQQRTGETHAHFAWLAPLLEGYYDPMYRYQLEKKAQQIAFRGDYHQVDAWLRHRYCASR</sequence>
<organism>
    <name type="scientific">Cronobacter sakazakii (strain ATCC BAA-894)</name>
    <name type="common">Enterobacter sakazakii</name>
    <dbReference type="NCBI Taxonomy" id="290339"/>
    <lineage>
        <taxon>Bacteria</taxon>
        <taxon>Pseudomonadati</taxon>
        <taxon>Pseudomonadota</taxon>
        <taxon>Gammaproteobacteria</taxon>
        <taxon>Enterobacterales</taxon>
        <taxon>Enterobacteriaceae</taxon>
        <taxon>Cronobacter</taxon>
    </lineage>
</organism>
<reference key="1">
    <citation type="journal article" date="2010" name="PLoS ONE">
        <title>Genome sequence of Cronobacter sakazakii BAA-894 and comparative genomic hybridization analysis with other Cronobacter species.</title>
        <authorList>
            <person name="Kucerova E."/>
            <person name="Clifton S.W."/>
            <person name="Xia X.Q."/>
            <person name="Long F."/>
            <person name="Porwollik S."/>
            <person name="Fulton L."/>
            <person name="Fronick C."/>
            <person name="Minx P."/>
            <person name="Kyung K."/>
            <person name="Warren W."/>
            <person name="Fulton R."/>
            <person name="Feng D."/>
            <person name="Wollam A."/>
            <person name="Shah N."/>
            <person name="Bhonagiri V."/>
            <person name="Nash W.E."/>
            <person name="Hallsworth-Pepin K."/>
            <person name="Wilson R.K."/>
            <person name="McClelland M."/>
            <person name="Forsythe S.J."/>
        </authorList>
    </citation>
    <scope>NUCLEOTIDE SEQUENCE [LARGE SCALE GENOMIC DNA]</scope>
    <source>
        <strain>ATCC BAA-894</strain>
    </source>
</reference>
<comment type="function">
    <text evidence="1">Involved in the post-transcriptional modification of the uridine at the wobble position (U34) of tRNA(Lys), tRNA(Glu) and tRNA(Gln). Catalyzes the conversion of 2-thiouridine (S2U-RNA) to 2-selenouridine (Se2U-RNA). Acts in a two-step process involving geranylation of 2-thiouridine (S2U) to S-geranyl-2-thiouridine (geS2U) and subsequent selenation of the latter derivative to 2-selenouridine (Se2U) in the tRNA chain.</text>
</comment>
<comment type="catalytic activity">
    <reaction evidence="1">
        <text>5-methylaminomethyl-2-thiouridine(34) in tRNA + selenophosphate + (2E)-geranyl diphosphate + H2O + H(+) = 5-methylaminomethyl-2-selenouridine(34) in tRNA + (2E)-thiogeraniol + phosphate + diphosphate</text>
        <dbReference type="Rhea" id="RHEA:42716"/>
        <dbReference type="Rhea" id="RHEA-COMP:10195"/>
        <dbReference type="Rhea" id="RHEA-COMP:10196"/>
        <dbReference type="ChEBI" id="CHEBI:15377"/>
        <dbReference type="ChEBI" id="CHEBI:15378"/>
        <dbReference type="ChEBI" id="CHEBI:16144"/>
        <dbReference type="ChEBI" id="CHEBI:33019"/>
        <dbReference type="ChEBI" id="CHEBI:43474"/>
        <dbReference type="ChEBI" id="CHEBI:58057"/>
        <dbReference type="ChEBI" id="CHEBI:74455"/>
        <dbReference type="ChEBI" id="CHEBI:82743"/>
        <dbReference type="ChEBI" id="CHEBI:143703"/>
        <dbReference type="EC" id="2.9.1.3"/>
    </reaction>
    <physiologicalReaction direction="left-to-right" evidence="1">
        <dbReference type="Rhea" id="RHEA:42717"/>
    </physiologicalReaction>
</comment>
<comment type="catalytic activity">
    <reaction evidence="1">
        <text>5-methylaminomethyl-2-thiouridine(34) in tRNA + (2E)-geranyl diphosphate = 5-methylaminomethyl-S-(2E)-geranyl-thiouridine(34) in tRNA + diphosphate</text>
        <dbReference type="Rhea" id="RHEA:14085"/>
        <dbReference type="Rhea" id="RHEA-COMP:10195"/>
        <dbReference type="Rhea" id="RHEA-COMP:14654"/>
        <dbReference type="ChEBI" id="CHEBI:33019"/>
        <dbReference type="ChEBI" id="CHEBI:58057"/>
        <dbReference type="ChEBI" id="CHEBI:74455"/>
        <dbReference type="ChEBI" id="CHEBI:140632"/>
    </reaction>
    <physiologicalReaction direction="left-to-right" evidence="1">
        <dbReference type="Rhea" id="RHEA:14086"/>
    </physiologicalReaction>
</comment>
<comment type="catalytic activity">
    <reaction evidence="1">
        <text>5-methylaminomethyl-S-(2E)-geranyl-thiouridine(34) in tRNA + selenophosphate + H(+) = 5-methylaminomethyl-2-(Se-phospho)selenouridine(34) in tRNA + (2E)-thiogeraniol</text>
        <dbReference type="Rhea" id="RHEA:60172"/>
        <dbReference type="Rhea" id="RHEA-COMP:14654"/>
        <dbReference type="Rhea" id="RHEA-COMP:15523"/>
        <dbReference type="ChEBI" id="CHEBI:15378"/>
        <dbReference type="ChEBI" id="CHEBI:16144"/>
        <dbReference type="ChEBI" id="CHEBI:140632"/>
        <dbReference type="ChEBI" id="CHEBI:143702"/>
        <dbReference type="ChEBI" id="CHEBI:143703"/>
    </reaction>
    <physiologicalReaction direction="left-to-right" evidence="1">
        <dbReference type="Rhea" id="RHEA:60173"/>
    </physiologicalReaction>
</comment>
<comment type="catalytic activity">
    <reaction evidence="1">
        <text>5-methylaminomethyl-2-(Se-phospho)selenouridine(34) in tRNA + H2O = 5-methylaminomethyl-2-selenouridine(34) in tRNA + phosphate</text>
        <dbReference type="Rhea" id="RHEA:60176"/>
        <dbReference type="Rhea" id="RHEA-COMP:10196"/>
        <dbReference type="Rhea" id="RHEA-COMP:15523"/>
        <dbReference type="ChEBI" id="CHEBI:15377"/>
        <dbReference type="ChEBI" id="CHEBI:43474"/>
        <dbReference type="ChEBI" id="CHEBI:82743"/>
        <dbReference type="ChEBI" id="CHEBI:143702"/>
    </reaction>
    <physiologicalReaction direction="left-to-right" evidence="1">
        <dbReference type="Rhea" id="RHEA:60177"/>
    </physiologicalReaction>
</comment>
<comment type="subunit">
    <text evidence="1">Monomer.</text>
</comment>
<comment type="similarity">
    <text evidence="1">Belongs to the SelU family.</text>
</comment>
<proteinExistence type="inferred from homology"/>
<accession>A7MJZ3</accession>
<feature type="chain" id="PRO_0000335592" description="tRNA 2-selenouridine synthase">
    <location>
        <begin position="1"/>
        <end position="377"/>
    </location>
</feature>
<feature type="domain" description="Rhodanese" evidence="1">
    <location>
        <begin position="18"/>
        <end position="141"/>
    </location>
</feature>
<feature type="active site" description="S-selanylcysteine intermediate" evidence="1">
    <location>
        <position position="101"/>
    </location>
</feature>